<dbReference type="EC" id="6.3.1.1" evidence="1"/>
<dbReference type="EMBL" id="CP000024">
    <property type="protein sequence ID" value="AAV61980.1"/>
    <property type="molecule type" value="Genomic_DNA"/>
</dbReference>
<dbReference type="RefSeq" id="WP_011226888.1">
    <property type="nucleotide sequence ID" value="NC_006449.1"/>
</dbReference>
<dbReference type="SMR" id="Q5M189"/>
<dbReference type="KEGG" id="stc:str0377"/>
<dbReference type="HOGENOM" id="CLU_071543_0_0_9"/>
<dbReference type="UniPathway" id="UPA00134">
    <property type="reaction ID" value="UER00194"/>
</dbReference>
<dbReference type="GO" id="GO:0005829">
    <property type="term" value="C:cytosol"/>
    <property type="evidence" value="ECO:0007669"/>
    <property type="project" value="TreeGrafter"/>
</dbReference>
<dbReference type="GO" id="GO:0004071">
    <property type="term" value="F:aspartate-ammonia ligase activity"/>
    <property type="evidence" value="ECO:0007669"/>
    <property type="project" value="UniProtKB-UniRule"/>
</dbReference>
<dbReference type="GO" id="GO:0005524">
    <property type="term" value="F:ATP binding"/>
    <property type="evidence" value="ECO:0007669"/>
    <property type="project" value="UniProtKB-UniRule"/>
</dbReference>
<dbReference type="GO" id="GO:0140096">
    <property type="term" value="F:catalytic activity, acting on a protein"/>
    <property type="evidence" value="ECO:0007669"/>
    <property type="project" value="UniProtKB-ARBA"/>
</dbReference>
<dbReference type="GO" id="GO:0016740">
    <property type="term" value="F:transferase activity"/>
    <property type="evidence" value="ECO:0007669"/>
    <property type="project" value="UniProtKB-ARBA"/>
</dbReference>
<dbReference type="GO" id="GO:0070981">
    <property type="term" value="P:L-asparagine biosynthetic process"/>
    <property type="evidence" value="ECO:0007669"/>
    <property type="project" value="UniProtKB-UniRule"/>
</dbReference>
<dbReference type="CDD" id="cd00645">
    <property type="entry name" value="AsnA"/>
    <property type="match status" value="1"/>
</dbReference>
<dbReference type="Gene3D" id="3.30.930.10">
    <property type="entry name" value="Bira Bifunctional Protein, Domain 2"/>
    <property type="match status" value="1"/>
</dbReference>
<dbReference type="HAMAP" id="MF_00555">
    <property type="entry name" value="AsnA"/>
    <property type="match status" value="1"/>
</dbReference>
<dbReference type="InterPro" id="IPR006195">
    <property type="entry name" value="aa-tRNA-synth_II"/>
</dbReference>
<dbReference type="InterPro" id="IPR045864">
    <property type="entry name" value="aa-tRNA-synth_II/BPL/LPL"/>
</dbReference>
<dbReference type="InterPro" id="IPR004618">
    <property type="entry name" value="AsnA"/>
</dbReference>
<dbReference type="NCBIfam" id="TIGR00669">
    <property type="entry name" value="asnA"/>
    <property type="match status" value="1"/>
</dbReference>
<dbReference type="PANTHER" id="PTHR30073">
    <property type="entry name" value="ASPARTATE--AMMONIA LIGASE"/>
    <property type="match status" value="1"/>
</dbReference>
<dbReference type="PANTHER" id="PTHR30073:SF5">
    <property type="entry name" value="ASPARTATE--AMMONIA LIGASE"/>
    <property type="match status" value="1"/>
</dbReference>
<dbReference type="Pfam" id="PF03590">
    <property type="entry name" value="AsnA"/>
    <property type="match status" value="1"/>
</dbReference>
<dbReference type="PIRSF" id="PIRSF001555">
    <property type="entry name" value="Asp_ammon_ligase"/>
    <property type="match status" value="1"/>
</dbReference>
<dbReference type="SUPFAM" id="SSF55681">
    <property type="entry name" value="Class II aaRS and biotin synthetases"/>
    <property type="match status" value="1"/>
</dbReference>
<dbReference type="PROSITE" id="PS50862">
    <property type="entry name" value="AA_TRNA_LIGASE_II"/>
    <property type="match status" value="1"/>
</dbReference>
<feature type="chain" id="PRO_1000017971" description="Aspartate--ammonia ligase">
    <location>
        <begin position="1"/>
        <end position="330"/>
    </location>
</feature>
<reference key="1">
    <citation type="journal article" date="2004" name="Nat. Biotechnol.">
        <title>Complete sequence and comparative genome analysis of the dairy bacterium Streptococcus thermophilus.</title>
        <authorList>
            <person name="Bolotin A."/>
            <person name="Quinquis B."/>
            <person name="Renault P."/>
            <person name="Sorokin A."/>
            <person name="Ehrlich S.D."/>
            <person name="Kulakauskas S."/>
            <person name="Lapidus A."/>
            <person name="Goltsman E."/>
            <person name="Mazur M."/>
            <person name="Pusch G.D."/>
            <person name="Fonstein M."/>
            <person name="Overbeek R."/>
            <person name="Kyprides N."/>
            <person name="Purnelle B."/>
            <person name="Prozzi D."/>
            <person name="Ngui K."/>
            <person name="Masuy D."/>
            <person name="Hancy F."/>
            <person name="Burteau S."/>
            <person name="Boutry M."/>
            <person name="Delcour J."/>
            <person name="Goffeau A."/>
            <person name="Hols P."/>
        </authorList>
    </citation>
    <scope>NUCLEOTIDE SEQUENCE [LARGE SCALE GENOMIC DNA]</scope>
    <source>
        <strain>CNRZ 1066</strain>
    </source>
</reference>
<evidence type="ECO:0000255" key="1">
    <source>
        <dbReference type="HAMAP-Rule" id="MF_00555"/>
    </source>
</evidence>
<keyword id="KW-0028">Amino-acid biosynthesis</keyword>
<keyword id="KW-0061">Asparagine biosynthesis</keyword>
<keyword id="KW-0067">ATP-binding</keyword>
<keyword id="KW-0963">Cytoplasm</keyword>
<keyword id="KW-0436">Ligase</keyword>
<keyword id="KW-0547">Nucleotide-binding</keyword>
<gene>
    <name evidence="1" type="primary">asnA</name>
    <name type="ordered locus">str0377</name>
</gene>
<proteinExistence type="inferred from homology"/>
<comment type="catalytic activity">
    <reaction evidence="1">
        <text>L-aspartate + NH4(+) + ATP = L-asparagine + AMP + diphosphate + H(+)</text>
        <dbReference type="Rhea" id="RHEA:11372"/>
        <dbReference type="ChEBI" id="CHEBI:15378"/>
        <dbReference type="ChEBI" id="CHEBI:28938"/>
        <dbReference type="ChEBI" id="CHEBI:29991"/>
        <dbReference type="ChEBI" id="CHEBI:30616"/>
        <dbReference type="ChEBI" id="CHEBI:33019"/>
        <dbReference type="ChEBI" id="CHEBI:58048"/>
        <dbReference type="ChEBI" id="CHEBI:456215"/>
        <dbReference type="EC" id="6.3.1.1"/>
    </reaction>
</comment>
<comment type="pathway">
    <text evidence="1">Amino-acid biosynthesis; L-asparagine biosynthesis; L-asparagine from L-aspartate (ammonia route): step 1/1.</text>
</comment>
<comment type="subcellular location">
    <subcellularLocation>
        <location evidence="1">Cytoplasm</location>
    </subcellularLocation>
</comment>
<comment type="similarity">
    <text evidence="1">Belongs to the class-II aminoacyl-tRNA synthetase family. AsnA subfamily.</text>
</comment>
<protein>
    <recommendedName>
        <fullName evidence="1">Aspartate--ammonia ligase</fullName>
        <ecNumber evidence="1">6.3.1.1</ecNumber>
    </recommendedName>
    <alternativeName>
        <fullName evidence="1">Asparagine synthetase A</fullName>
    </alternativeName>
</protein>
<organism>
    <name type="scientific">Streptococcus thermophilus (strain CNRZ 1066)</name>
    <dbReference type="NCBI Taxonomy" id="299768"/>
    <lineage>
        <taxon>Bacteria</taxon>
        <taxon>Bacillati</taxon>
        <taxon>Bacillota</taxon>
        <taxon>Bacilli</taxon>
        <taxon>Lactobacillales</taxon>
        <taxon>Streptococcaceae</taxon>
        <taxon>Streptococcus</taxon>
    </lineage>
</organism>
<sequence length="330" mass="37495">MKKSFIDQQKEISFVKNTFTQYLIDKLDVVEVQGPILSKVGDGMQDNLNGIENPVTVNVLQIPDATYEVVHSLAKWKRHTLARFGFNEGEGLVVNMKALRPDEDSLDATHSVYVDQWDWEKVIPDGHRNIAYLKETVETIYKVIRLTELAVEARYDIEAVLPKKITFIHSEELVEKYPDLTPKERENAITKEYGAVFLIGIGGVLPDGKPHDGRAPDYDDWTTESEKGYHGLNGDILVWNEQLGHAFELSSMGIRVDEDALKRQVEITGDQDRLKLDWHQALLHGQFPLTIGGGIGQSRMAMFLLRKKHIGEVQTSVWPDAVRETYENIL</sequence>
<name>ASNA_STRT1</name>
<accession>Q5M189</accession>